<gene>
    <name evidence="1" type="primary">fmt</name>
    <name type="ordered locus">LA_2396</name>
</gene>
<dbReference type="EC" id="2.1.2.9" evidence="1"/>
<dbReference type="EMBL" id="AE010300">
    <property type="protein sequence ID" value="AAN49595.2"/>
    <property type="molecule type" value="Genomic_DNA"/>
</dbReference>
<dbReference type="RefSeq" id="NP_712577.2">
    <property type="nucleotide sequence ID" value="NC_004342.2"/>
</dbReference>
<dbReference type="RefSeq" id="WP_000690652.1">
    <property type="nucleotide sequence ID" value="NC_004342.2"/>
</dbReference>
<dbReference type="SMR" id="Q8F3K6"/>
<dbReference type="FunCoup" id="Q8F3K6">
    <property type="interactions" value="460"/>
</dbReference>
<dbReference type="STRING" id="189518.LA_2396"/>
<dbReference type="PaxDb" id="189518-LA_2396"/>
<dbReference type="EnsemblBacteria" id="AAN49595">
    <property type="protein sequence ID" value="AAN49595"/>
    <property type="gene ID" value="LA_2396"/>
</dbReference>
<dbReference type="GeneID" id="61144851"/>
<dbReference type="KEGG" id="lil:LA_2396"/>
<dbReference type="PATRIC" id="fig|189518.3.peg.2376"/>
<dbReference type="HOGENOM" id="CLU_033347_1_1_12"/>
<dbReference type="InParanoid" id="Q8F3K6"/>
<dbReference type="OrthoDB" id="9802815at2"/>
<dbReference type="Proteomes" id="UP000001408">
    <property type="component" value="Chromosome I"/>
</dbReference>
<dbReference type="GO" id="GO:0005829">
    <property type="term" value="C:cytosol"/>
    <property type="evidence" value="ECO:0000318"/>
    <property type="project" value="GO_Central"/>
</dbReference>
<dbReference type="GO" id="GO:0004479">
    <property type="term" value="F:methionyl-tRNA formyltransferase activity"/>
    <property type="evidence" value="ECO:0000318"/>
    <property type="project" value="GO_Central"/>
</dbReference>
<dbReference type="GO" id="GO:0071951">
    <property type="term" value="P:conversion of methionyl-tRNA to N-formyl-methionyl-tRNA"/>
    <property type="evidence" value="ECO:0000318"/>
    <property type="project" value="GO_Central"/>
</dbReference>
<dbReference type="CDD" id="cd08646">
    <property type="entry name" value="FMT_core_Met-tRNA-FMT_N"/>
    <property type="match status" value="1"/>
</dbReference>
<dbReference type="CDD" id="cd08704">
    <property type="entry name" value="Met_tRNA_FMT_C"/>
    <property type="match status" value="1"/>
</dbReference>
<dbReference type="Gene3D" id="3.10.25.10">
    <property type="entry name" value="Formyl transferase, C-terminal domain"/>
    <property type="match status" value="1"/>
</dbReference>
<dbReference type="Gene3D" id="3.40.50.170">
    <property type="entry name" value="Formyl transferase, N-terminal domain"/>
    <property type="match status" value="1"/>
</dbReference>
<dbReference type="HAMAP" id="MF_00182">
    <property type="entry name" value="Formyl_trans"/>
    <property type="match status" value="1"/>
</dbReference>
<dbReference type="InterPro" id="IPR005794">
    <property type="entry name" value="Fmt"/>
</dbReference>
<dbReference type="InterPro" id="IPR005793">
    <property type="entry name" value="Formyl_trans_C"/>
</dbReference>
<dbReference type="InterPro" id="IPR037022">
    <property type="entry name" value="Formyl_trans_C_sf"/>
</dbReference>
<dbReference type="InterPro" id="IPR002376">
    <property type="entry name" value="Formyl_transf_N"/>
</dbReference>
<dbReference type="InterPro" id="IPR036477">
    <property type="entry name" value="Formyl_transf_N_sf"/>
</dbReference>
<dbReference type="InterPro" id="IPR011034">
    <property type="entry name" value="Formyl_transferase-like_C_sf"/>
</dbReference>
<dbReference type="InterPro" id="IPR044135">
    <property type="entry name" value="Met-tRNA-FMT_C"/>
</dbReference>
<dbReference type="InterPro" id="IPR041711">
    <property type="entry name" value="Met-tRNA-FMT_N"/>
</dbReference>
<dbReference type="NCBIfam" id="TIGR00460">
    <property type="entry name" value="fmt"/>
    <property type="match status" value="1"/>
</dbReference>
<dbReference type="PANTHER" id="PTHR11138">
    <property type="entry name" value="METHIONYL-TRNA FORMYLTRANSFERASE"/>
    <property type="match status" value="1"/>
</dbReference>
<dbReference type="PANTHER" id="PTHR11138:SF5">
    <property type="entry name" value="METHIONYL-TRNA FORMYLTRANSFERASE, MITOCHONDRIAL"/>
    <property type="match status" value="1"/>
</dbReference>
<dbReference type="Pfam" id="PF02911">
    <property type="entry name" value="Formyl_trans_C"/>
    <property type="match status" value="1"/>
</dbReference>
<dbReference type="Pfam" id="PF00551">
    <property type="entry name" value="Formyl_trans_N"/>
    <property type="match status" value="1"/>
</dbReference>
<dbReference type="SUPFAM" id="SSF50486">
    <property type="entry name" value="FMT C-terminal domain-like"/>
    <property type="match status" value="1"/>
</dbReference>
<dbReference type="SUPFAM" id="SSF53328">
    <property type="entry name" value="Formyltransferase"/>
    <property type="match status" value="1"/>
</dbReference>
<comment type="function">
    <text evidence="1">Attaches a formyl group to the free amino group of methionyl-tRNA(fMet). The formyl group appears to play a dual role in the initiator identity of N-formylmethionyl-tRNA by promoting its recognition by IF2 and preventing the misappropriation of this tRNA by the elongation apparatus.</text>
</comment>
<comment type="catalytic activity">
    <reaction evidence="1">
        <text>L-methionyl-tRNA(fMet) + (6R)-10-formyltetrahydrofolate = N-formyl-L-methionyl-tRNA(fMet) + (6S)-5,6,7,8-tetrahydrofolate + H(+)</text>
        <dbReference type="Rhea" id="RHEA:24380"/>
        <dbReference type="Rhea" id="RHEA-COMP:9952"/>
        <dbReference type="Rhea" id="RHEA-COMP:9953"/>
        <dbReference type="ChEBI" id="CHEBI:15378"/>
        <dbReference type="ChEBI" id="CHEBI:57453"/>
        <dbReference type="ChEBI" id="CHEBI:78530"/>
        <dbReference type="ChEBI" id="CHEBI:78844"/>
        <dbReference type="ChEBI" id="CHEBI:195366"/>
        <dbReference type="EC" id="2.1.2.9"/>
    </reaction>
</comment>
<comment type="similarity">
    <text evidence="1">Belongs to the Fmt family.</text>
</comment>
<keyword id="KW-0648">Protein biosynthesis</keyword>
<keyword id="KW-1185">Reference proteome</keyword>
<keyword id="KW-0808">Transferase</keyword>
<accession>Q8F3K6</accession>
<sequence>MKIGYFGTPEHSAKLLEALIDSQLTEVLFVVTNPDRPKGRSKIPEPGPVKKKALEYNIPVFQYESIKKEKEKALSDFGLFSADLYVVFAYGSILPKEVYAHSTLTSINLHGSLLPDLRGASPVQTALWKGYTKTGITIQYIGEKMDEGDILLTKEVEIAPEDNTGTLMDKITDAGIESILQLLKTYDGKPFPSVPQAHDKATYCGKIKSEDRILDWSLKSEELHNRIRALYPDMIATTTFRDKRMNILKTKPSSLSLEINPTPGKLKRLDKKRLLTQCGDGRFLEILELQPENKNRMTASDFLNGFRIQEGETFG</sequence>
<name>FMT_LEPIN</name>
<feature type="chain" id="PRO_0000082986" description="Methionyl-tRNA formyltransferase">
    <location>
        <begin position="1"/>
        <end position="315"/>
    </location>
</feature>
<feature type="binding site" evidence="1">
    <location>
        <begin position="112"/>
        <end position="115"/>
    </location>
    <ligand>
        <name>(6S)-5,6,7,8-tetrahydrofolate</name>
        <dbReference type="ChEBI" id="CHEBI:57453"/>
    </ligand>
</feature>
<proteinExistence type="inferred from homology"/>
<organism>
    <name type="scientific">Leptospira interrogans serogroup Icterohaemorrhagiae serovar Lai (strain 56601)</name>
    <dbReference type="NCBI Taxonomy" id="189518"/>
    <lineage>
        <taxon>Bacteria</taxon>
        <taxon>Pseudomonadati</taxon>
        <taxon>Spirochaetota</taxon>
        <taxon>Spirochaetia</taxon>
        <taxon>Leptospirales</taxon>
        <taxon>Leptospiraceae</taxon>
        <taxon>Leptospira</taxon>
    </lineage>
</organism>
<protein>
    <recommendedName>
        <fullName evidence="1">Methionyl-tRNA formyltransferase</fullName>
        <ecNumber evidence="1">2.1.2.9</ecNumber>
    </recommendedName>
</protein>
<evidence type="ECO:0000255" key="1">
    <source>
        <dbReference type="HAMAP-Rule" id="MF_00182"/>
    </source>
</evidence>
<reference key="1">
    <citation type="journal article" date="2003" name="Nature">
        <title>Unique physiological and pathogenic features of Leptospira interrogans revealed by whole-genome sequencing.</title>
        <authorList>
            <person name="Ren S.-X."/>
            <person name="Fu G."/>
            <person name="Jiang X.-G."/>
            <person name="Zeng R."/>
            <person name="Miao Y.-G."/>
            <person name="Xu H."/>
            <person name="Zhang Y.-X."/>
            <person name="Xiong H."/>
            <person name="Lu G."/>
            <person name="Lu L.-F."/>
            <person name="Jiang H.-Q."/>
            <person name="Jia J."/>
            <person name="Tu Y.-F."/>
            <person name="Jiang J.-X."/>
            <person name="Gu W.-Y."/>
            <person name="Zhang Y.-Q."/>
            <person name="Cai Z."/>
            <person name="Sheng H.-H."/>
            <person name="Yin H.-F."/>
            <person name="Zhang Y."/>
            <person name="Zhu G.-F."/>
            <person name="Wan M."/>
            <person name="Huang H.-L."/>
            <person name="Qian Z."/>
            <person name="Wang S.-Y."/>
            <person name="Ma W."/>
            <person name="Yao Z.-J."/>
            <person name="Shen Y."/>
            <person name="Qiang B.-Q."/>
            <person name="Xia Q.-C."/>
            <person name="Guo X.-K."/>
            <person name="Danchin A."/>
            <person name="Saint Girons I."/>
            <person name="Somerville R.L."/>
            <person name="Wen Y.-M."/>
            <person name="Shi M.-H."/>
            <person name="Chen Z."/>
            <person name="Xu J.-G."/>
            <person name="Zhao G.-P."/>
        </authorList>
    </citation>
    <scope>NUCLEOTIDE SEQUENCE [LARGE SCALE GENOMIC DNA]</scope>
    <source>
        <strain>56601</strain>
    </source>
</reference>